<sequence>MMYSPICLTQDEFHPFIEALLPHVRAIAYTWFNLQARKRKYFKKHEKRMSKDEERAVKDELLSEKPEIKQKWASRLLAKLRKDIRQEYREDFVLTVTGKKHPCCVLSNPDQKGKIRRIDCLRQADKVWRLDLVMVILFKGIPLESTDGERLMKSPHCTNPALCVQPHHITVSVKELDLFLAYYVQEQDSGQSGSPSHNDPAKNPPGYLEDSFVKSGVFNVSELVRVSRTPITQGTGVNFPIGEIPSQPYYHDMNSGVNLQRSLSSPPSSKRPKTISIDENMEPSPTGDFYPSPSSPAAGSRTWHERDQDMSSPTTMKKPEKPLFSSASPQDSSPRLSTFPQHHHPGIPGVAHSVISTRTPPPPSPLPFPTQAILPPAPSSYFSHPTIRYPPHLNPQDTLKNYVPSYDPSSPQTSQSWYLG</sequence>
<feature type="chain" id="PRO_0000100195" description="Nuclear factor 1 B-type">
    <location>
        <begin position="1"/>
        <end position="420"/>
    </location>
</feature>
<feature type="DNA-binding region" description="CTF/NF-I" evidence="2">
    <location>
        <begin position="1"/>
        <end position="195"/>
    </location>
</feature>
<feature type="region of interest" description="Disordered" evidence="3">
    <location>
        <begin position="189"/>
        <end position="208"/>
    </location>
</feature>
<feature type="region of interest" description="Disordered" evidence="3">
    <location>
        <begin position="252"/>
        <end position="364"/>
    </location>
</feature>
<feature type="region of interest" description="Disordered" evidence="3">
    <location>
        <begin position="377"/>
        <end position="420"/>
    </location>
</feature>
<feature type="short sequence motif" description="9aaTAD" evidence="5">
    <location>
        <begin position="397"/>
        <end position="405"/>
    </location>
</feature>
<feature type="compositionally biased region" description="Polar residues" evidence="3">
    <location>
        <begin position="325"/>
        <end position="340"/>
    </location>
</feature>
<feature type="compositionally biased region" description="Polar residues" evidence="3">
    <location>
        <begin position="407"/>
        <end position="420"/>
    </location>
</feature>
<feature type="modified residue" description="Phosphoserine" evidence="10">
    <location>
        <position position="264"/>
    </location>
</feature>
<feature type="modified residue" description="Phosphothreonine" evidence="1">
    <location>
        <position position="286"/>
    </location>
</feature>
<feature type="modified residue" description="Phosphoserine" evidence="13">
    <location>
        <position position="292"/>
    </location>
</feature>
<feature type="modified residue" description="Phosphoserine" evidence="13">
    <location>
        <position position="295"/>
    </location>
</feature>
<feature type="modified residue" description="Phosphoserine" evidence="11 12">
    <location>
        <position position="312"/>
    </location>
</feature>
<feature type="modified residue" description="Phosphoserine" evidence="10 11 12">
    <location>
        <position position="328"/>
    </location>
</feature>
<feature type="modified residue" description="Phosphoserine" evidence="11 12">
    <location>
        <position position="333"/>
    </location>
</feature>
<feature type="modified residue" description="Asymmetric dimethylarginine" evidence="1">
    <location>
        <position position="335"/>
    </location>
</feature>
<feature type="modified residue" description="Asymmetric dimethylarginine" evidence="1">
    <location>
        <position position="388"/>
    </location>
</feature>
<feature type="splice variant" id="VSP_054713" description="In isoform 6." evidence="7">
    <location>
        <begin position="1"/>
        <end position="252"/>
    </location>
</feature>
<feature type="splice variant" id="VSP_044462" description="In isoform 4." evidence="6">
    <original>MMYSPICLTQ</original>
    <variation>MERIPVSVDFWVVCCAVLKCNPGIPMERIPVSVDFWVVCCAVLKCNPGIPKRMSTLCFGFS</variation>
    <location>
        <begin position="1"/>
        <end position="10"/>
    </location>
</feature>
<feature type="splice variant" id="VSP_003545" description="In isoform 3." evidence="8">
    <original>QD</original>
    <variation>AR</variation>
    <location>
        <begin position="187"/>
        <end position="188"/>
    </location>
</feature>
<feature type="splice variant" id="VSP_003546" description="In isoform 3." evidence="8">
    <location>
        <begin position="189"/>
        <end position="420"/>
    </location>
</feature>
<feature type="splice variant" id="VSP_054714" description="In isoform 6." evidence="7">
    <original>SWYLG</original>
    <variation>PNGSGQVVGKVPGHFTPVLAPSPHPSAVRPVTLSMTDTKPITTSTEAYTASGTSQANRYVGLSPRDPSFLHQQQLRICDWTMNQNGRHLYPSTSEDTLGITWQSPGTWASLVPFQVSNRTPILPANVQNYGLNIIGEPFLQAETSN</variation>
    <location>
        <begin position="416"/>
        <end position="420"/>
    </location>
</feature>
<feature type="splice variant" id="VSP_045065" description="In isoform 5." evidence="7">
    <original>S</original>
    <variation>PNGSGQVVGKVPGHFTPVLAPSPHPSAVRPVTLSMTDTKPITTSTEAYTASGTSQANRYVGLSPRDPSFLHQQQS</variation>
    <location>
        <position position="416"/>
    </location>
</feature>
<feature type="sequence variant" id="VAR_081859" description="In MACID." evidence="4">
    <location>
        <begin position="37"/>
        <end position="420"/>
    </location>
</feature>
<feature type="sequence variant" id="VAR_081860" description="In MACID." evidence="4">
    <location>
        <begin position="89"/>
        <end position="420"/>
    </location>
</feature>
<feature type="sequence variant" id="VAR_081861" description="In MACID; significant decrease of GFAP transcriptional activation; dbSNP:rs1554709683." evidence="4">
    <original>K</original>
    <variation>T</variation>
    <location>
        <position position="114"/>
    </location>
</feature>
<feature type="sequence variant" id="VAR_081862" description="In MACID; significant decrease of GFAP transcriptional activation; dbSNP:rs1554709662." evidence="4">
    <original>K</original>
    <variation>E</variation>
    <location>
        <position position="126"/>
    </location>
</feature>
<feature type="sequence variant" id="VAR_081863" description="In MACID; significant decrease of GFAP transcriptional activation; dbSNP:rs1554709654." evidence="4">
    <original>L</original>
    <variation>P</variation>
    <location>
        <position position="132"/>
    </location>
</feature>
<feature type="sequence variant" id="VAR_081864" description="In MACID; likely benign; does not affect GFAP transcriptional activation; dbSNP:rs1554639196." evidence="4">
    <original>S</original>
    <variation>L</variation>
    <location>
        <position position="356"/>
    </location>
</feature>
<feature type="sequence conflict" description="In Ref. 1; AAB41899." evidence="9" ref="1">
    <original>I</original>
    <variation>M</variation>
    <location>
        <position position="17"/>
    </location>
</feature>
<feature type="sequence conflict" description="In Ref. 4; BAD18416." evidence="9" ref="4">
    <original>R</original>
    <variation>G</variation>
    <location>
        <position position="37"/>
    </location>
</feature>
<feature type="sequence conflict" description="In Ref. 5; BX648845." evidence="9" ref="5">
    <original>S</original>
    <variation>F</variation>
    <location>
        <position position="74"/>
    </location>
</feature>
<feature type="sequence conflict" description="In Ref. 4; BAD18416." evidence="9" ref="4">
    <original>N</original>
    <variation>S</variation>
    <location>
        <position position="198"/>
    </location>
</feature>
<feature type="sequence conflict" description="In Ref. 5; BX648845." evidence="9" ref="5">
    <original>S</original>
    <variation>R</variation>
    <location>
        <position position="284"/>
    </location>
</feature>
<protein>
    <recommendedName>
        <fullName>Nuclear factor 1 B-type</fullName>
        <shortName>NF1-B</shortName>
        <shortName>Nuclear factor 1/B</shortName>
    </recommendedName>
    <alternativeName>
        <fullName>CCAAT-box-binding transcription factor</fullName>
        <shortName>CTF</shortName>
    </alternativeName>
    <alternativeName>
        <fullName>Nuclear factor I/B</fullName>
        <shortName>NF-I/B</shortName>
        <shortName>NFI-B</shortName>
    </alternativeName>
    <alternativeName>
        <fullName>TGGCA-binding protein</fullName>
    </alternativeName>
</protein>
<comment type="function">
    <text evidence="4">Transcriptional activator of GFAP, essential for proper brain development (PubMed:30388402). Recognizes and binds the palindromic sequence 5'-TTGGCNNNNNGCCAA-3' present in viral and cellular promoters and in the origin of replication of adenovirus type 2. These proteins are individually capable of activating transcription and replication.</text>
</comment>
<comment type="subunit">
    <text>Binds DNA as a homodimer.</text>
</comment>
<comment type="interaction">
    <interactant intactId="EBI-10963452">
        <id>O00712</id>
    </interactant>
    <interactant intactId="EBI-741360">
        <id>P08651</id>
        <label>NFIC</label>
    </interactant>
    <organismsDiffer>false</organismsDiffer>
    <experiments>6</experiments>
</comment>
<comment type="subcellular location">
    <subcellularLocation>
        <location>Nucleus</location>
    </subcellularLocation>
</comment>
<comment type="alternative products">
    <event type="alternative splicing"/>
    <isoform>
        <id>O00712-1</id>
        <name>1</name>
        <sequence type="displayed"/>
    </isoform>
    <isoform>
        <id>O00712-3</id>
        <name>2</name>
        <sequence type="not described"/>
    </isoform>
    <isoform>
        <id>O00712-2</id>
        <name>3</name>
        <name>NFI-B3</name>
        <sequence type="described" ref="VSP_003545 VSP_003546"/>
    </isoform>
    <isoform>
        <id>O00712-4</id>
        <name>4</name>
        <sequence type="described" ref="VSP_044462"/>
    </isoform>
    <isoform>
        <id>O00712-5</id>
        <name>5</name>
        <sequence type="described" ref="VSP_045065"/>
    </isoform>
    <isoform>
        <id>O00712-6</id>
        <name>6</name>
        <sequence type="described" ref="VSP_054713 VSP_054714"/>
    </isoform>
    <text>Additional isoforms seem to exist.</text>
</comment>
<comment type="domain">
    <text evidence="5">The 9aaTAD motif is a transactivation domain present in a large number of yeast and animal transcription factors.</text>
</comment>
<comment type="disease" evidence="4">
    <disease id="DI-05465">
        <name>Macrocephaly, acquired, with impaired intellectual development</name>
        <acronym>MACID</acronym>
        <description>An autosomal dominant disorder characterized by postnatal macrocephaly and borderline to mild intellectual disability. Additional variable neurodevelopmental features include muscular hypotonia, motor and speech delay, attention deficit disorder, autism spectrum disorder, and behavioral abnormalities. Some patients present corpus callosum dysgenesis.</description>
        <dbReference type="MIM" id="618286"/>
    </disease>
    <text>The disease is caused by variants affecting the gene represented in this entry.</text>
</comment>
<comment type="similarity">
    <text evidence="2">Belongs to the CTF/NF-I family.</text>
</comment>
<organism>
    <name type="scientific">Homo sapiens</name>
    <name type="common">Human</name>
    <dbReference type="NCBI Taxonomy" id="9606"/>
    <lineage>
        <taxon>Eukaryota</taxon>
        <taxon>Metazoa</taxon>
        <taxon>Chordata</taxon>
        <taxon>Craniata</taxon>
        <taxon>Vertebrata</taxon>
        <taxon>Euteleostomi</taxon>
        <taxon>Mammalia</taxon>
        <taxon>Eutheria</taxon>
        <taxon>Euarchontoglires</taxon>
        <taxon>Primates</taxon>
        <taxon>Haplorrhini</taxon>
        <taxon>Catarrhini</taxon>
        <taxon>Hominidae</taxon>
        <taxon>Homo</taxon>
    </lineage>
</organism>
<accession>O00712</accession>
<accession>G3V1P1</accession>
<accession>H7BYE8</accession>
<accession>O00166</accession>
<accession>Q12858</accession>
<accession>Q5VW29</accession>
<accession>Q63HM5</accession>
<accession>Q6ZNF9</accession>
<accession>Q96J45</accession>
<proteinExistence type="evidence at protein level"/>
<name>NFIB_HUMAN</name>
<reference key="1">
    <citation type="journal article" date="1998" name="Oncogene">
        <title>Identification of NFIB as recurrent translocation partner gene of HMGIC in pleomorphic adenomas.</title>
        <authorList>
            <person name="Geurts J.M.W."/>
            <person name="Schoenmakers E.F.P.M."/>
            <person name="Roijer E."/>
            <person name="Astroem A.-K."/>
            <person name="Stenman G."/>
            <person name="van de Ven W.J.M."/>
        </authorList>
    </citation>
    <scope>NUCLEOTIDE SEQUENCE [MRNA] (ISOFORM 1)</scope>
</reference>
<reference key="2">
    <citation type="journal article" date="1997" name="J. Biol. Chem.">
        <title>NFI-B3, a novel transcriptional repressor of the nuclear factor I family, is generated by alternative RNA processing.</title>
        <authorList>
            <person name="Liu Y."/>
            <person name="Bernard H.U."/>
            <person name="Apt D."/>
        </authorList>
    </citation>
    <scope>NUCLEOTIDE SEQUENCE [MRNA] (ISOFORM 3)</scope>
    <source>
        <tissue>Foreskin</tissue>
    </source>
</reference>
<reference key="3">
    <citation type="submission" date="2003-05" db="EMBL/GenBank/DDBJ databases">
        <title>Cloning of human full-length CDSs in BD Creator(TM) system donor vector.</title>
        <authorList>
            <person name="Kalnine N."/>
            <person name="Chen X."/>
            <person name="Rolfs A."/>
            <person name="Halleck A."/>
            <person name="Hines L."/>
            <person name="Eisenstein S."/>
            <person name="Koundinya M."/>
            <person name="Raphael J."/>
            <person name="Moreira D."/>
            <person name="Kelley T."/>
            <person name="LaBaer J."/>
            <person name="Lin Y."/>
            <person name="Phelan M."/>
            <person name="Farmer A."/>
        </authorList>
    </citation>
    <scope>NUCLEOTIDE SEQUENCE [LARGE SCALE MRNA] (ISOFORM 1)</scope>
</reference>
<reference key="4">
    <citation type="journal article" date="2004" name="Nat. Genet.">
        <title>Complete sequencing and characterization of 21,243 full-length human cDNAs.</title>
        <authorList>
            <person name="Ota T."/>
            <person name="Suzuki Y."/>
            <person name="Nishikawa T."/>
            <person name="Otsuki T."/>
            <person name="Sugiyama T."/>
            <person name="Irie R."/>
            <person name="Wakamatsu A."/>
            <person name="Hayashi K."/>
            <person name="Sato H."/>
            <person name="Nagai K."/>
            <person name="Kimura K."/>
            <person name="Makita H."/>
            <person name="Sekine M."/>
            <person name="Obayashi M."/>
            <person name="Nishi T."/>
            <person name="Shibahara T."/>
            <person name="Tanaka T."/>
            <person name="Ishii S."/>
            <person name="Yamamoto J."/>
            <person name="Saito K."/>
            <person name="Kawai Y."/>
            <person name="Isono Y."/>
            <person name="Nakamura Y."/>
            <person name="Nagahari K."/>
            <person name="Murakami K."/>
            <person name="Yasuda T."/>
            <person name="Iwayanagi T."/>
            <person name="Wagatsuma M."/>
            <person name="Shiratori A."/>
            <person name="Sudo H."/>
            <person name="Hosoiri T."/>
            <person name="Kaku Y."/>
            <person name="Kodaira H."/>
            <person name="Kondo H."/>
            <person name="Sugawara M."/>
            <person name="Takahashi M."/>
            <person name="Kanda K."/>
            <person name="Yokoi T."/>
            <person name="Furuya T."/>
            <person name="Kikkawa E."/>
            <person name="Omura Y."/>
            <person name="Abe K."/>
            <person name="Kamihara K."/>
            <person name="Katsuta N."/>
            <person name="Sato K."/>
            <person name="Tanikawa M."/>
            <person name="Yamazaki M."/>
            <person name="Ninomiya K."/>
            <person name="Ishibashi T."/>
            <person name="Yamashita H."/>
            <person name="Murakawa K."/>
            <person name="Fujimori K."/>
            <person name="Tanai H."/>
            <person name="Kimata M."/>
            <person name="Watanabe M."/>
            <person name="Hiraoka S."/>
            <person name="Chiba Y."/>
            <person name="Ishida S."/>
            <person name="Ono Y."/>
            <person name="Takiguchi S."/>
            <person name="Watanabe S."/>
            <person name="Yosida M."/>
            <person name="Hotuta T."/>
            <person name="Kusano J."/>
            <person name="Kanehori K."/>
            <person name="Takahashi-Fujii A."/>
            <person name="Hara H."/>
            <person name="Tanase T.-O."/>
            <person name="Nomura Y."/>
            <person name="Togiya S."/>
            <person name="Komai F."/>
            <person name="Hara R."/>
            <person name="Takeuchi K."/>
            <person name="Arita M."/>
            <person name="Imose N."/>
            <person name="Musashino K."/>
            <person name="Yuuki H."/>
            <person name="Oshima A."/>
            <person name="Sasaki N."/>
            <person name="Aotsuka S."/>
            <person name="Yoshikawa Y."/>
            <person name="Matsunawa H."/>
            <person name="Ichihara T."/>
            <person name="Shiohata N."/>
            <person name="Sano S."/>
            <person name="Moriya S."/>
            <person name="Momiyama H."/>
            <person name="Satoh N."/>
            <person name="Takami S."/>
            <person name="Terashima Y."/>
            <person name="Suzuki O."/>
            <person name="Nakagawa S."/>
            <person name="Senoh A."/>
            <person name="Mizoguchi H."/>
            <person name="Goto Y."/>
            <person name="Shimizu F."/>
            <person name="Wakebe H."/>
            <person name="Hishigaki H."/>
            <person name="Watanabe T."/>
            <person name="Sugiyama A."/>
            <person name="Takemoto M."/>
            <person name="Kawakami B."/>
            <person name="Yamazaki M."/>
            <person name="Watanabe K."/>
            <person name="Kumagai A."/>
            <person name="Itakura S."/>
            <person name="Fukuzumi Y."/>
            <person name="Fujimori Y."/>
            <person name="Komiyama M."/>
            <person name="Tashiro H."/>
            <person name="Tanigami A."/>
            <person name="Fujiwara T."/>
            <person name="Ono T."/>
            <person name="Yamada K."/>
            <person name="Fujii Y."/>
            <person name="Ozaki K."/>
            <person name="Hirao M."/>
            <person name="Ohmori Y."/>
            <person name="Kawabata A."/>
            <person name="Hikiji T."/>
            <person name="Kobatake N."/>
            <person name="Inagaki H."/>
            <person name="Ikema Y."/>
            <person name="Okamoto S."/>
            <person name="Okitani R."/>
            <person name="Kawakami T."/>
            <person name="Noguchi S."/>
            <person name="Itoh T."/>
            <person name="Shigeta K."/>
            <person name="Senba T."/>
            <person name="Matsumura K."/>
            <person name="Nakajima Y."/>
            <person name="Mizuno T."/>
            <person name="Morinaga M."/>
            <person name="Sasaki M."/>
            <person name="Togashi T."/>
            <person name="Oyama M."/>
            <person name="Hata H."/>
            <person name="Watanabe M."/>
            <person name="Komatsu T."/>
            <person name="Mizushima-Sugano J."/>
            <person name="Satoh T."/>
            <person name="Shirai Y."/>
            <person name="Takahashi Y."/>
            <person name="Nakagawa K."/>
            <person name="Okumura K."/>
            <person name="Nagase T."/>
            <person name="Nomura N."/>
            <person name="Kikuchi H."/>
            <person name="Masuho Y."/>
            <person name="Yamashita R."/>
            <person name="Nakai K."/>
            <person name="Yada T."/>
            <person name="Nakamura Y."/>
            <person name="Ohara O."/>
            <person name="Isogai T."/>
            <person name="Sugano S."/>
        </authorList>
    </citation>
    <scope>NUCLEOTIDE SEQUENCE [LARGE SCALE MRNA] (ISOFORM 4)</scope>
    <source>
        <tissue>Amygdala</tissue>
    </source>
</reference>
<reference key="5">
    <citation type="journal article" date="2007" name="BMC Genomics">
        <title>The full-ORF clone resource of the German cDNA consortium.</title>
        <authorList>
            <person name="Bechtel S."/>
            <person name="Rosenfelder H."/>
            <person name="Duda A."/>
            <person name="Schmidt C.P."/>
            <person name="Ernst U."/>
            <person name="Wellenreuther R."/>
            <person name="Mehrle A."/>
            <person name="Schuster C."/>
            <person name="Bahr A."/>
            <person name="Bloecker H."/>
            <person name="Heubner D."/>
            <person name="Hoerlein A."/>
            <person name="Michel G."/>
            <person name="Wedler H."/>
            <person name="Koehrer K."/>
            <person name="Ottenwaelder B."/>
            <person name="Poustka A."/>
            <person name="Wiemann S."/>
            <person name="Schupp I."/>
        </authorList>
    </citation>
    <scope>NUCLEOTIDE SEQUENCE [LARGE SCALE MRNA] (ISOFORMS 5 AND 6)</scope>
    <source>
        <tissue>Colon epithelium</tissue>
    </source>
</reference>
<reference key="6">
    <citation type="journal article" date="2004" name="Nature">
        <title>DNA sequence and analysis of human chromosome 9.</title>
        <authorList>
            <person name="Humphray S.J."/>
            <person name="Oliver K."/>
            <person name="Hunt A.R."/>
            <person name="Plumb R.W."/>
            <person name="Loveland J.E."/>
            <person name="Howe K.L."/>
            <person name="Andrews T.D."/>
            <person name="Searle S."/>
            <person name="Hunt S.E."/>
            <person name="Scott C.E."/>
            <person name="Jones M.C."/>
            <person name="Ainscough R."/>
            <person name="Almeida J.P."/>
            <person name="Ambrose K.D."/>
            <person name="Ashwell R.I.S."/>
            <person name="Babbage A.K."/>
            <person name="Babbage S."/>
            <person name="Bagguley C.L."/>
            <person name="Bailey J."/>
            <person name="Banerjee R."/>
            <person name="Barker D.J."/>
            <person name="Barlow K.F."/>
            <person name="Bates K."/>
            <person name="Beasley H."/>
            <person name="Beasley O."/>
            <person name="Bird C.P."/>
            <person name="Bray-Allen S."/>
            <person name="Brown A.J."/>
            <person name="Brown J.Y."/>
            <person name="Burford D."/>
            <person name="Burrill W."/>
            <person name="Burton J."/>
            <person name="Carder C."/>
            <person name="Carter N.P."/>
            <person name="Chapman J.C."/>
            <person name="Chen Y."/>
            <person name="Clarke G."/>
            <person name="Clark S.Y."/>
            <person name="Clee C.M."/>
            <person name="Clegg S."/>
            <person name="Collier R.E."/>
            <person name="Corby N."/>
            <person name="Crosier M."/>
            <person name="Cummings A.T."/>
            <person name="Davies J."/>
            <person name="Dhami P."/>
            <person name="Dunn M."/>
            <person name="Dutta I."/>
            <person name="Dyer L.W."/>
            <person name="Earthrowl M.E."/>
            <person name="Faulkner L."/>
            <person name="Fleming C.J."/>
            <person name="Frankish A."/>
            <person name="Frankland J.A."/>
            <person name="French L."/>
            <person name="Fricker D.G."/>
            <person name="Garner P."/>
            <person name="Garnett J."/>
            <person name="Ghori J."/>
            <person name="Gilbert J.G.R."/>
            <person name="Glison C."/>
            <person name="Grafham D.V."/>
            <person name="Gribble S."/>
            <person name="Griffiths C."/>
            <person name="Griffiths-Jones S."/>
            <person name="Grocock R."/>
            <person name="Guy J."/>
            <person name="Hall R.E."/>
            <person name="Hammond S."/>
            <person name="Harley J.L."/>
            <person name="Harrison E.S.I."/>
            <person name="Hart E.A."/>
            <person name="Heath P.D."/>
            <person name="Henderson C.D."/>
            <person name="Hopkins B.L."/>
            <person name="Howard P.J."/>
            <person name="Howden P.J."/>
            <person name="Huckle E."/>
            <person name="Johnson C."/>
            <person name="Johnson D."/>
            <person name="Joy A.A."/>
            <person name="Kay M."/>
            <person name="Keenan S."/>
            <person name="Kershaw J.K."/>
            <person name="Kimberley A.M."/>
            <person name="King A."/>
            <person name="Knights A."/>
            <person name="Laird G.K."/>
            <person name="Langford C."/>
            <person name="Lawlor S."/>
            <person name="Leongamornlert D.A."/>
            <person name="Leversha M."/>
            <person name="Lloyd C."/>
            <person name="Lloyd D.M."/>
            <person name="Lovell J."/>
            <person name="Martin S."/>
            <person name="Mashreghi-Mohammadi M."/>
            <person name="Matthews L."/>
            <person name="McLaren S."/>
            <person name="McLay K.E."/>
            <person name="McMurray A."/>
            <person name="Milne S."/>
            <person name="Nickerson T."/>
            <person name="Nisbett J."/>
            <person name="Nordsiek G."/>
            <person name="Pearce A.V."/>
            <person name="Peck A.I."/>
            <person name="Porter K.M."/>
            <person name="Pandian R."/>
            <person name="Pelan S."/>
            <person name="Phillimore B."/>
            <person name="Povey S."/>
            <person name="Ramsey Y."/>
            <person name="Rand V."/>
            <person name="Scharfe M."/>
            <person name="Sehra H.K."/>
            <person name="Shownkeen R."/>
            <person name="Sims S.K."/>
            <person name="Skuce C.D."/>
            <person name="Smith M."/>
            <person name="Steward C.A."/>
            <person name="Swarbreck D."/>
            <person name="Sycamore N."/>
            <person name="Tester J."/>
            <person name="Thorpe A."/>
            <person name="Tracey A."/>
            <person name="Tromans A."/>
            <person name="Thomas D.W."/>
            <person name="Wall M."/>
            <person name="Wallis J.M."/>
            <person name="West A.P."/>
            <person name="Whitehead S.L."/>
            <person name="Willey D.L."/>
            <person name="Williams S.A."/>
            <person name="Wilming L."/>
            <person name="Wray P.W."/>
            <person name="Young L."/>
            <person name="Ashurst J.L."/>
            <person name="Coulson A."/>
            <person name="Blocker H."/>
            <person name="Durbin R.M."/>
            <person name="Sulston J.E."/>
            <person name="Hubbard T."/>
            <person name="Jackson M.J."/>
            <person name="Bentley D.R."/>
            <person name="Beck S."/>
            <person name="Rogers J."/>
            <person name="Dunham I."/>
        </authorList>
    </citation>
    <scope>NUCLEOTIDE SEQUENCE [LARGE SCALE GENOMIC DNA]</scope>
</reference>
<reference key="7">
    <citation type="submission" date="2005-07" db="EMBL/GenBank/DDBJ databases">
        <authorList>
            <person name="Mural R.J."/>
            <person name="Istrail S."/>
            <person name="Sutton G."/>
            <person name="Florea L."/>
            <person name="Halpern A.L."/>
            <person name="Mobarry C.M."/>
            <person name="Lippert R."/>
            <person name="Walenz B."/>
            <person name="Shatkay H."/>
            <person name="Dew I."/>
            <person name="Miller J.R."/>
            <person name="Flanigan M.J."/>
            <person name="Edwards N.J."/>
            <person name="Bolanos R."/>
            <person name="Fasulo D."/>
            <person name="Halldorsson B.V."/>
            <person name="Hannenhalli S."/>
            <person name="Turner R."/>
            <person name="Yooseph S."/>
            <person name="Lu F."/>
            <person name="Nusskern D.R."/>
            <person name="Shue B.C."/>
            <person name="Zheng X.H."/>
            <person name="Zhong F."/>
            <person name="Delcher A.L."/>
            <person name="Huson D.H."/>
            <person name="Kravitz S.A."/>
            <person name="Mouchard L."/>
            <person name="Reinert K."/>
            <person name="Remington K.A."/>
            <person name="Clark A.G."/>
            <person name="Waterman M.S."/>
            <person name="Eichler E.E."/>
            <person name="Adams M.D."/>
            <person name="Hunkapiller M.W."/>
            <person name="Myers E.W."/>
            <person name="Venter J.C."/>
        </authorList>
    </citation>
    <scope>NUCLEOTIDE SEQUENCE [LARGE SCALE GENOMIC DNA]</scope>
</reference>
<reference key="8">
    <citation type="journal article" date="2004" name="Genome Res.">
        <title>The status, quality, and expansion of the NIH full-length cDNA project: the Mammalian Gene Collection (MGC).</title>
        <authorList>
            <consortium name="The MGC Project Team"/>
        </authorList>
    </citation>
    <scope>NUCLEOTIDE SEQUENCE [LARGE SCALE MRNA] (ISOFORM 1)</scope>
    <source>
        <tissue>Cervix</tissue>
    </source>
</reference>
<reference key="9">
    <citation type="journal article" date="1995" name="Genomics">
        <title>Chromosomal localization of the four genes (NFIA, B, C, and X) for the human transcription factor nuclear factor I by FISH.</title>
        <authorList>
            <person name="Qian F."/>
            <person name="Kruse U."/>
            <person name="Lichter P."/>
            <person name="Sippel A.E."/>
        </authorList>
    </citation>
    <scope>NUCLEOTIDE SEQUENCE [MRNA] OF 20-283</scope>
</reference>
<reference key="10">
    <citation type="journal article" date="2008" name="Proc. Natl. Acad. Sci. U.S.A.">
        <title>A quantitative atlas of mitotic phosphorylation.</title>
        <authorList>
            <person name="Dephoure N."/>
            <person name="Zhou C."/>
            <person name="Villen J."/>
            <person name="Beausoleil S.A."/>
            <person name="Bakalarski C.E."/>
            <person name="Elledge S.J."/>
            <person name="Gygi S.P."/>
        </authorList>
    </citation>
    <scope>PHOSPHORYLATION [LARGE SCALE ANALYSIS] AT SER-264 AND SER-328</scope>
    <scope>IDENTIFICATION BY MASS SPECTROMETRY [LARGE SCALE ANALYSIS]</scope>
    <source>
        <tissue>Cervix carcinoma</tissue>
    </source>
</reference>
<reference key="11">
    <citation type="journal article" date="2010" name="Sci. Signal.">
        <title>Quantitative phosphoproteomics reveals widespread full phosphorylation site occupancy during mitosis.</title>
        <authorList>
            <person name="Olsen J.V."/>
            <person name="Vermeulen M."/>
            <person name="Santamaria A."/>
            <person name="Kumar C."/>
            <person name="Miller M.L."/>
            <person name="Jensen L.J."/>
            <person name="Gnad F."/>
            <person name="Cox J."/>
            <person name="Jensen T.S."/>
            <person name="Nigg E.A."/>
            <person name="Brunak S."/>
            <person name="Mann M."/>
        </authorList>
    </citation>
    <scope>PHOSPHORYLATION [LARGE SCALE ANALYSIS] AT SER-312; SER-328 AND SER-333</scope>
    <scope>IDENTIFICATION BY MASS SPECTROMETRY [LARGE SCALE ANALYSIS]</scope>
    <source>
        <tissue>Cervix carcinoma</tissue>
    </source>
</reference>
<reference key="12">
    <citation type="journal article" date="2013" name="J. Proteome Res.">
        <title>Toward a comprehensive characterization of a human cancer cell phosphoproteome.</title>
        <authorList>
            <person name="Zhou H."/>
            <person name="Di Palma S."/>
            <person name="Preisinger C."/>
            <person name="Peng M."/>
            <person name="Polat A.N."/>
            <person name="Heck A.J."/>
            <person name="Mohammed S."/>
        </authorList>
    </citation>
    <scope>PHOSPHORYLATION [LARGE SCALE ANALYSIS] AT SER-312; SER-328 AND SER-333</scope>
    <scope>IDENTIFICATION BY MASS SPECTROMETRY [LARGE SCALE ANALYSIS]</scope>
    <source>
        <tissue>Cervix carcinoma</tissue>
    </source>
</reference>
<reference key="13">
    <citation type="journal article" date="2014" name="J. Proteomics">
        <title>An enzyme assisted RP-RPLC approach for in-depth analysis of human liver phosphoproteome.</title>
        <authorList>
            <person name="Bian Y."/>
            <person name="Song C."/>
            <person name="Cheng K."/>
            <person name="Dong M."/>
            <person name="Wang F."/>
            <person name="Huang J."/>
            <person name="Sun D."/>
            <person name="Wang L."/>
            <person name="Ye M."/>
            <person name="Zou H."/>
        </authorList>
    </citation>
    <scope>PHOSPHORYLATION [LARGE SCALE ANALYSIS] AT SER-292 AND SER-295</scope>
    <scope>IDENTIFICATION BY MASS SPECTROMETRY [LARGE SCALE ANALYSIS]</scope>
    <source>
        <tissue>Liver</tissue>
    </source>
</reference>
<reference key="14">
    <citation type="journal article" date="2020" name="Cell. Mol. Life Sci.">
        <title>The evolution of the 9aaTAD domain in Sp2 proteins: inactivation with valines and intron reservoirs.</title>
        <authorList>
            <person name="Piskacek M."/>
            <person name="Havelka M."/>
            <person name="Jendruchova K."/>
            <person name="Knight A."/>
            <person name="Keegan L.P."/>
        </authorList>
    </citation>
    <scope>9AATAD MOTIF</scope>
</reference>
<reference key="15">
    <citation type="journal article" date="2018" name="Am. J. Hum. Genet.">
        <title>NFIB haploinsufficiency is associated with intellectual disability and macrocephaly.</title>
        <authorList>
            <person name="Schanze I."/>
            <person name="Bunt J."/>
            <person name="Lim J.W.C."/>
            <person name="Schanze D."/>
            <person name="Dean R.J."/>
            <person name="Alders M."/>
            <person name="Blanchet P."/>
            <person name="Attie-Bitach T."/>
            <person name="Berland S."/>
            <person name="Boogert S."/>
            <person name="Boppudi S."/>
            <person name="Bridges C.J."/>
            <person name="Cho M.T."/>
            <person name="Dobyns W.B."/>
            <person name="Donnai D."/>
            <person name="Douglas J."/>
            <person name="Earl D.L."/>
            <person name="Edwards T.J."/>
            <person name="Faivre L."/>
            <person name="Fregeau B."/>
            <person name="Genevieve D."/>
            <person name="Gerard M."/>
            <person name="Gatinois V."/>
            <person name="Holder-Espinasse M."/>
            <person name="Huth S.F."/>
            <person name="Izumi K."/>
            <person name="Kerr B."/>
            <person name="Lacaze E."/>
            <person name="Lakeman P."/>
            <person name="Mahida S."/>
            <person name="Mirzaa G.M."/>
            <person name="Morgan S.M."/>
            <person name="Nowak C."/>
            <person name="Peeters H."/>
            <person name="Petit F."/>
            <person name="Pilz D.T."/>
            <person name="Puechberty J."/>
            <person name="Reinstein E."/>
            <person name="Riviere J.B."/>
            <person name="Santani A.B."/>
            <person name="Schneider A."/>
            <person name="Sherr E.H."/>
            <person name="Smith-Hicks C."/>
            <person name="Wieland I."/>
            <person name="Zackai E."/>
            <person name="Zhao X."/>
            <person name="Gronostajski R.M."/>
            <person name="Zenker M."/>
            <person name="Richards L.J."/>
        </authorList>
    </citation>
    <scope>FUNCTION</scope>
    <scope>INVOLVEMENT IN MACID</scope>
    <scope>VARIANTS MACID 37-ARG--GLY-420 DEL; 89-ARG--GLY-420 DEL; THR-114; GLU-126; PRO-132 AND LEU-356</scope>
    <scope>CHARACTERIZATION OF VARIANTS MACID THR-114; GLU-126; PRO-132 AND LEU-356</scope>
</reference>
<keyword id="KW-0010">Activator</keyword>
<keyword id="KW-0025">Alternative splicing</keyword>
<keyword id="KW-0225">Disease variant</keyword>
<keyword id="KW-0235">DNA replication</keyword>
<keyword id="KW-0238">DNA-binding</keyword>
<keyword id="KW-0991">Intellectual disability</keyword>
<keyword id="KW-0488">Methylation</keyword>
<keyword id="KW-0539">Nucleus</keyword>
<keyword id="KW-0597">Phosphoprotein</keyword>
<keyword id="KW-1267">Proteomics identification</keyword>
<keyword id="KW-1185">Reference proteome</keyword>
<keyword id="KW-0804">Transcription</keyword>
<keyword id="KW-0805">Transcription regulation</keyword>
<dbReference type="EMBL" id="U85193">
    <property type="protein sequence ID" value="AAB41899.1"/>
    <property type="molecule type" value="mRNA"/>
</dbReference>
<dbReference type="EMBL" id="U70862">
    <property type="protein sequence ID" value="AAB51197.1"/>
    <property type="molecule type" value="mRNA"/>
</dbReference>
<dbReference type="EMBL" id="BT007266">
    <property type="protein sequence ID" value="AAP35930.1"/>
    <property type="molecule type" value="mRNA"/>
</dbReference>
<dbReference type="EMBL" id="AK131233">
    <property type="protein sequence ID" value="BAD18416.1"/>
    <property type="molecule type" value="mRNA"/>
</dbReference>
<dbReference type="EMBL" id="BX648416">
    <property type="protein sequence ID" value="CAH56156.1"/>
    <property type="molecule type" value="mRNA"/>
</dbReference>
<dbReference type="EMBL" id="BX648845">
    <property type="status" value="NOT_ANNOTATED_CDS"/>
    <property type="molecule type" value="mRNA"/>
</dbReference>
<dbReference type="EMBL" id="AL136366">
    <property type="status" value="NOT_ANNOTATED_CDS"/>
    <property type="molecule type" value="Genomic_DNA"/>
</dbReference>
<dbReference type="EMBL" id="AL441963">
    <property type="status" value="NOT_ANNOTATED_CDS"/>
    <property type="molecule type" value="Genomic_DNA"/>
</dbReference>
<dbReference type="EMBL" id="AL137017">
    <property type="status" value="NOT_ANNOTATED_CDS"/>
    <property type="molecule type" value="Genomic_DNA"/>
</dbReference>
<dbReference type="EMBL" id="AL449443">
    <property type="status" value="NOT_ANNOTATED_CDS"/>
    <property type="molecule type" value="Genomic_DNA"/>
</dbReference>
<dbReference type="EMBL" id="CH471071">
    <property type="protein sequence ID" value="EAW58697.1"/>
    <property type="molecule type" value="Genomic_DNA"/>
</dbReference>
<dbReference type="EMBL" id="CH471071">
    <property type="protein sequence ID" value="EAW58699.1"/>
    <property type="molecule type" value="Genomic_DNA"/>
</dbReference>
<dbReference type="EMBL" id="BC001283">
    <property type="protein sequence ID" value="AAH01283.1"/>
    <property type="molecule type" value="mRNA"/>
</dbReference>
<dbReference type="EMBL" id="U07810">
    <property type="protein sequence ID" value="AAA93125.1"/>
    <property type="molecule type" value="mRNA"/>
</dbReference>
<dbReference type="CCDS" id="CCDS55291.1">
    <molecule id="O00712-5"/>
</dbReference>
<dbReference type="CCDS" id="CCDS6474.1">
    <molecule id="O00712-1"/>
</dbReference>
<dbReference type="CCDS" id="CCDS65007.1">
    <molecule id="O00712-6"/>
</dbReference>
<dbReference type="RefSeq" id="NP_001177666.1">
    <molecule id="O00712-5"/>
    <property type="nucleotide sequence ID" value="NM_001190737.2"/>
</dbReference>
<dbReference type="RefSeq" id="NP_001177667.1">
    <property type="nucleotide sequence ID" value="NM_001190738.1"/>
</dbReference>
<dbReference type="RefSeq" id="NP_001269716.1">
    <molecule id="O00712-6"/>
    <property type="nucleotide sequence ID" value="NM_001282787.2"/>
</dbReference>
<dbReference type="RefSeq" id="NP_005587.2">
    <molecule id="O00712-1"/>
    <property type="nucleotide sequence ID" value="NM_005596.3"/>
</dbReference>
<dbReference type="SMR" id="O00712"/>
<dbReference type="BioGRID" id="110853">
    <property type="interactions" value="144"/>
</dbReference>
<dbReference type="DIP" id="DIP-61433N"/>
<dbReference type="FunCoup" id="O00712">
    <property type="interactions" value="2131"/>
</dbReference>
<dbReference type="IntAct" id="O00712">
    <property type="interactions" value="119"/>
</dbReference>
<dbReference type="STRING" id="9606.ENSP00000370340"/>
<dbReference type="GlyGen" id="O00712">
    <property type="glycosylation" value="6 sites, 1 O-linked glycan (6 sites)"/>
</dbReference>
<dbReference type="iPTMnet" id="O00712"/>
<dbReference type="PhosphoSitePlus" id="O00712"/>
<dbReference type="BioMuta" id="NFIB"/>
<dbReference type="jPOST" id="O00712"/>
<dbReference type="MassIVE" id="O00712"/>
<dbReference type="PaxDb" id="9606-ENSP00000370340"/>
<dbReference type="PeptideAtlas" id="O00712"/>
<dbReference type="ProteomicsDB" id="32394"/>
<dbReference type="ProteomicsDB" id="43594"/>
<dbReference type="ProteomicsDB" id="48006">
    <molecule id="O00712-1"/>
</dbReference>
<dbReference type="ProteomicsDB" id="48007">
    <molecule id="O00712-2"/>
</dbReference>
<dbReference type="ProteomicsDB" id="65511"/>
<dbReference type="Pumba" id="O00712"/>
<dbReference type="Antibodypedia" id="1309">
    <property type="antibodies" value="230 antibodies from 30 providers"/>
</dbReference>
<dbReference type="DNASU" id="4781"/>
<dbReference type="Ensembl" id="ENST00000380953.6">
    <molecule id="O00712-5"/>
    <property type="protein sequence ID" value="ENSP00000370340.1"/>
    <property type="gene ID" value="ENSG00000147862.18"/>
</dbReference>
<dbReference type="Ensembl" id="ENST00000380959.7">
    <molecule id="O00712-1"/>
    <property type="protein sequence ID" value="ENSP00000370346.3"/>
    <property type="gene ID" value="ENSG00000147862.18"/>
</dbReference>
<dbReference type="Ensembl" id="ENST00000543693.5">
    <molecule id="O00712-6"/>
    <property type="protein sequence ID" value="ENSP00000442888.1"/>
    <property type="gene ID" value="ENSG00000147862.18"/>
</dbReference>
<dbReference type="GeneID" id="4781"/>
<dbReference type="KEGG" id="hsa:4781"/>
<dbReference type="MANE-Select" id="ENST00000380953.6">
    <molecule id="O00712-5"/>
    <property type="protein sequence ID" value="ENSP00000370340.1"/>
    <property type="RefSeq nucleotide sequence ID" value="NM_001190737.2"/>
    <property type="RefSeq protein sequence ID" value="NP_001177666.1"/>
</dbReference>
<dbReference type="UCSC" id="uc003zld.4">
    <molecule id="O00712-1"/>
    <property type="organism name" value="human"/>
</dbReference>
<dbReference type="AGR" id="HGNC:7785"/>
<dbReference type="CTD" id="4781"/>
<dbReference type="DisGeNET" id="4781"/>
<dbReference type="GeneCards" id="NFIB"/>
<dbReference type="HGNC" id="HGNC:7785">
    <property type="gene designation" value="NFIB"/>
</dbReference>
<dbReference type="HPA" id="ENSG00000147862">
    <property type="expression patterns" value="Low tissue specificity"/>
</dbReference>
<dbReference type="MalaCards" id="NFIB"/>
<dbReference type="MIM" id="600728">
    <property type="type" value="gene"/>
</dbReference>
<dbReference type="MIM" id="618286">
    <property type="type" value="phenotype"/>
</dbReference>
<dbReference type="neXtProt" id="NX_O00712"/>
<dbReference type="OpenTargets" id="ENSG00000147862"/>
<dbReference type="PharmGKB" id="PA31591"/>
<dbReference type="VEuPathDB" id="HostDB:ENSG00000147862"/>
<dbReference type="eggNOG" id="KOG3663">
    <property type="taxonomic scope" value="Eukaryota"/>
</dbReference>
<dbReference type="GeneTree" id="ENSGT00950000182916"/>
<dbReference type="HOGENOM" id="CLU_061490_0_0_1"/>
<dbReference type="InParanoid" id="O00712"/>
<dbReference type="OrthoDB" id="10055441at2759"/>
<dbReference type="PAN-GO" id="O00712">
    <property type="GO annotations" value="4 GO annotations based on evolutionary models"/>
</dbReference>
<dbReference type="PhylomeDB" id="O00712"/>
<dbReference type="TreeFam" id="TF313889"/>
<dbReference type="PathwayCommons" id="O00712"/>
<dbReference type="Reactome" id="R-HSA-73980">
    <property type="pathway name" value="RNA Polymerase III Transcription Termination"/>
</dbReference>
<dbReference type="Reactome" id="R-HSA-749476">
    <property type="pathway name" value="RNA Polymerase III Abortive And Retractive Initiation"/>
</dbReference>
<dbReference type="SignaLink" id="O00712"/>
<dbReference type="SIGNOR" id="O00712"/>
<dbReference type="BioGRID-ORCS" id="4781">
    <property type="hits" value="28 hits in 1171 CRISPR screens"/>
</dbReference>
<dbReference type="ChiTaRS" id="NFIB">
    <property type="organism name" value="human"/>
</dbReference>
<dbReference type="GeneWiki" id="NFIB_(gene)"/>
<dbReference type="GenomeRNAi" id="4781"/>
<dbReference type="Pharos" id="O00712">
    <property type="development level" value="Tbio"/>
</dbReference>
<dbReference type="PRO" id="PR:O00712"/>
<dbReference type="Proteomes" id="UP000005640">
    <property type="component" value="Chromosome 9"/>
</dbReference>
<dbReference type="RNAct" id="O00712">
    <property type="molecule type" value="protein"/>
</dbReference>
<dbReference type="Bgee" id="ENSG00000147862">
    <property type="expression patterns" value="Expressed in pericardium and 211 other cell types or tissues"/>
</dbReference>
<dbReference type="ExpressionAtlas" id="O00712">
    <property type="expression patterns" value="baseline and differential"/>
</dbReference>
<dbReference type="GO" id="GO:0044300">
    <property type="term" value="C:cerebellar mossy fiber"/>
    <property type="evidence" value="ECO:0000250"/>
    <property type="project" value="UniProtKB"/>
</dbReference>
<dbReference type="GO" id="GO:0000785">
    <property type="term" value="C:chromatin"/>
    <property type="evidence" value="ECO:0000247"/>
    <property type="project" value="NTNU_SB"/>
</dbReference>
<dbReference type="GO" id="GO:0001650">
    <property type="term" value="C:fibrillar center"/>
    <property type="evidence" value="ECO:0000314"/>
    <property type="project" value="HPA"/>
</dbReference>
<dbReference type="GO" id="GO:0005654">
    <property type="term" value="C:nucleoplasm"/>
    <property type="evidence" value="ECO:0000314"/>
    <property type="project" value="HPA"/>
</dbReference>
<dbReference type="GO" id="GO:0005634">
    <property type="term" value="C:nucleus"/>
    <property type="evidence" value="ECO:0000314"/>
    <property type="project" value="UniProtKB"/>
</dbReference>
<dbReference type="GO" id="GO:0003677">
    <property type="term" value="F:DNA binding"/>
    <property type="evidence" value="ECO:0000314"/>
    <property type="project" value="UniProtKB"/>
</dbReference>
<dbReference type="GO" id="GO:0001228">
    <property type="term" value="F:DNA-binding transcription activator activity, RNA polymerase II-specific"/>
    <property type="evidence" value="ECO:0000314"/>
    <property type="project" value="NTNU_SB"/>
</dbReference>
<dbReference type="GO" id="GO:0000981">
    <property type="term" value="F:DNA-binding transcription factor activity, RNA polymerase II-specific"/>
    <property type="evidence" value="ECO:0000314"/>
    <property type="project" value="UniProtKB"/>
</dbReference>
<dbReference type="GO" id="GO:0000978">
    <property type="term" value="F:RNA polymerase II cis-regulatory region sequence-specific DNA binding"/>
    <property type="evidence" value="ECO:0000314"/>
    <property type="project" value="NTNU_SB"/>
</dbReference>
<dbReference type="GO" id="GO:1990837">
    <property type="term" value="F:sequence-specific double-stranded DNA binding"/>
    <property type="evidence" value="ECO:0000314"/>
    <property type="project" value="ARUK-UCL"/>
</dbReference>
<dbReference type="GO" id="GO:0140416">
    <property type="term" value="F:transcription regulator inhibitor activity"/>
    <property type="evidence" value="ECO:0000314"/>
    <property type="project" value="GO_Central"/>
</dbReference>
<dbReference type="GO" id="GO:0021960">
    <property type="term" value="P:anterior commissure morphogenesis"/>
    <property type="evidence" value="ECO:0000250"/>
    <property type="project" value="UniProtKB"/>
</dbReference>
<dbReference type="GO" id="GO:0007420">
    <property type="term" value="P:brain development"/>
    <property type="evidence" value="ECO:0000315"/>
    <property type="project" value="UniProtKB"/>
</dbReference>
<dbReference type="GO" id="GO:0060689">
    <property type="term" value="P:cell differentiation involved in salivary gland development"/>
    <property type="evidence" value="ECO:0007669"/>
    <property type="project" value="Ensembl"/>
</dbReference>
<dbReference type="GO" id="GO:0021846">
    <property type="term" value="P:cell proliferation in forebrain"/>
    <property type="evidence" value="ECO:0007669"/>
    <property type="project" value="Ensembl"/>
</dbReference>
<dbReference type="GO" id="GO:0002062">
    <property type="term" value="P:chondrocyte differentiation"/>
    <property type="evidence" value="ECO:0000250"/>
    <property type="project" value="UniProtKB"/>
</dbReference>
<dbReference type="GO" id="GO:0060486">
    <property type="term" value="P:club cell differentiation"/>
    <property type="evidence" value="ECO:0000250"/>
    <property type="project" value="UniProtKB"/>
</dbReference>
<dbReference type="GO" id="GO:0071679">
    <property type="term" value="P:commissural neuron axon guidance"/>
    <property type="evidence" value="ECO:0000250"/>
    <property type="project" value="UniProtKB"/>
</dbReference>
<dbReference type="GO" id="GO:0006260">
    <property type="term" value="P:DNA replication"/>
    <property type="evidence" value="ECO:0007669"/>
    <property type="project" value="UniProtKB-KW"/>
</dbReference>
<dbReference type="GO" id="GO:0010458">
    <property type="term" value="P:exit from mitosis"/>
    <property type="evidence" value="ECO:0007669"/>
    <property type="project" value="Ensembl"/>
</dbReference>
<dbReference type="GO" id="GO:0010467">
    <property type="term" value="P:gene expression"/>
    <property type="evidence" value="ECO:0007669"/>
    <property type="project" value="Ensembl"/>
</dbReference>
<dbReference type="GO" id="GO:0002067">
    <property type="term" value="P:glandular epithelial cell differentiation"/>
    <property type="evidence" value="ECO:0007669"/>
    <property type="project" value="Ensembl"/>
</dbReference>
<dbReference type="GO" id="GO:0010001">
    <property type="term" value="P:glial cell differentiation"/>
    <property type="evidence" value="ECO:0000250"/>
    <property type="project" value="UniProtKB"/>
</dbReference>
<dbReference type="GO" id="GO:0021780">
    <property type="term" value="P:glial cell fate specification"/>
    <property type="evidence" value="ECO:0007669"/>
    <property type="project" value="Ensembl"/>
</dbReference>
<dbReference type="GO" id="GO:0014009">
    <property type="term" value="P:glial cell proliferation"/>
    <property type="evidence" value="ECO:0007669"/>
    <property type="project" value="Ensembl"/>
</dbReference>
<dbReference type="GO" id="GO:0030902">
    <property type="term" value="P:hindbrain development"/>
    <property type="evidence" value="ECO:0007669"/>
    <property type="project" value="Ensembl"/>
</dbReference>
<dbReference type="GO" id="GO:0061141">
    <property type="term" value="P:lung ciliated cell differentiation"/>
    <property type="evidence" value="ECO:0000250"/>
    <property type="project" value="UniProtKB"/>
</dbReference>
<dbReference type="GO" id="GO:0043392">
    <property type="term" value="P:negative regulation of DNA binding"/>
    <property type="evidence" value="ECO:0000314"/>
    <property type="project" value="UniProtKB"/>
</dbReference>
<dbReference type="GO" id="GO:2000795">
    <property type="term" value="P:negative regulation of epithelial cell proliferation involved in lung morphogenesis"/>
    <property type="evidence" value="ECO:0000250"/>
    <property type="project" value="UniProtKB"/>
</dbReference>
<dbReference type="GO" id="GO:2000791">
    <property type="term" value="P:negative regulation of mesenchymal cell proliferation involved in lung development"/>
    <property type="evidence" value="ECO:0000250"/>
    <property type="project" value="UniProtKB"/>
</dbReference>
<dbReference type="GO" id="GO:1902894">
    <property type="term" value="P:negative regulation of miRNA transcription"/>
    <property type="evidence" value="ECO:0000315"/>
    <property type="project" value="BHF-UCL"/>
</dbReference>
<dbReference type="GO" id="GO:2000647">
    <property type="term" value="P:negative regulation of stem cell proliferation"/>
    <property type="evidence" value="ECO:0007669"/>
    <property type="project" value="Ensembl"/>
</dbReference>
<dbReference type="GO" id="GO:0000122">
    <property type="term" value="P:negative regulation of transcription by RNA polymerase II"/>
    <property type="evidence" value="ECO:0000314"/>
    <property type="project" value="UniProtKB"/>
</dbReference>
<dbReference type="GO" id="GO:0048665">
    <property type="term" value="P:neuron fate specification"/>
    <property type="evidence" value="ECO:0007669"/>
    <property type="project" value="Ensembl"/>
</dbReference>
<dbReference type="GO" id="GO:0045893">
    <property type="term" value="P:positive regulation of DNA-templated transcription"/>
    <property type="evidence" value="ECO:0000314"/>
    <property type="project" value="UniProtKB"/>
</dbReference>
<dbReference type="GO" id="GO:0045944">
    <property type="term" value="P:positive regulation of transcription by RNA polymerase II"/>
    <property type="evidence" value="ECO:0000314"/>
    <property type="project" value="UniProtKB"/>
</dbReference>
<dbReference type="GO" id="GO:0021740">
    <property type="term" value="P:principal sensory nucleus of trigeminal nerve development"/>
    <property type="evidence" value="ECO:0000250"/>
    <property type="project" value="UniProtKB"/>
</dbReference>
<dbReference type="GO" id="GO:0031099">
    <property type="term" value="P:regeneration"/>
    <property type="evidence" value="ECO:0007669"/>
    <property type="project" value="Ensembl"/>
</dbReference>
<dbReference type="GO" id="GO:0006357">
    <property type="term" value="P:regulation of transcription by RNA polymerase II"/>
    <property type="evidence" value="ECO:0000318"/>
    <property type="project" value="GO_Central"/>
</dbReference>
<dbReference type="GO" id="GO:0009617">
    <property type="term" value="P:response to bacterium"/>
    <property type="evidence" value="ECO:0007669"/>
    <property type="project" value="Ensembl"/>
</dbReference>
<dbReference type="GO" id="GO:0009611">
    <property type="term" value="P:response to wounding"/>
    <property type="evidence" value="ECO:0007669"/>
    <property type="project" value="Ensembl"/>
</dbReference>
<dbReference type="GO" id="GO:0060041">
    <property type="term" value="P:retina development in camera-type eye"/>
    <property type="evidence" value="ECO:0007669"/>
    <property type="project" value="Ensembl"/>
</dbReference>
<dbReference type="GO" id="GO:0060662">
    <property type="term" value="P:salivary gland cavitation"/>
    <property type="evidence" value="ECO:0007669"/>
    <property type="project" value="Ensembl"/>
</dbReference>
<dbReference type="GO" id="GO:0019827">
    <property type="term" value="P:stem cell population maintenance"/>
    <property type="evidence" value="ECO:0007669"/>
    <property type="project" value="Ensembl"/>
</dbReference>
<dbReference type="GO" id="GO:0072089">
    <property type="term" value="P:stem cell proliferation"/>
    <property type="evidence" value="ECO:0007669"/>
    <property type="project" value="Ensembl"/>
</dbReference>
<dbReference type="GO" id="GO:0001894">
    <property type="term" value="P:tissue homeostasis"/>
    <property type="evidence" value="ECO:0007669"/>
    <property type="project" value="Ensembl"/>
</dbReference>
<dbReference type="GO" id="GO:0060509">
    <property type="term" value="P:type I pneumocyte differentiation"/>
    <property type="evidence" value="ECO:0000250"/>
    <property type="project" value="UniProtKB"/>
</dbReference>
<dbReference type="GO" id="GO:0060510">
    <property type="term" value="P:type II pneumocyte differentiation"/>
    <property type="evidence" value="ECO:0000250"/>
    <property type="project" value="UniProtKB"/>
</dbReference>
<dbReference type="InterPro" id="IPR000647">
    <property type="entry name" value="CTF/NFI"/>
</dbReference>
<dbReference type="InterPro" id="IPR020604">
    <property type="entry name" value="CTF/NFI_DNA-bd-dom"/>
</dbReference>
<dbReference type="InterPro" id="IPR019739">
    <property type="entry name" value="CTF/NFI_DNA-bd_CS"/>
</dbReference>
<dbReference type="InterPro" id="IPR019548">
    <property type="entry name" value="CTF/NFI_DNA-bd_N"/>
</dbReference>
<dbReference type="InterPro" id="IPR003619">
    <property type="entry name" value="MAD_homology1_Dwarfin-type"/>
</dbReference>
<dbReference type="PANTHER" id="PTHR11492:SF4">
    <property type="entry name" value="NUCLEAR FACTOR 1 B-TYPE"/>
    <property type="match status" value="1"/>
</dbReference>
<dbReference type="PANTHER" id="PTHR11492">
    <property type="entry name" value="NUCLEAR FACTOR I"/>
    <property type="match status" value="1"/>
</dbReference>
<dbReference type="Pfam" id="PF00859">
    <property type="entry name" value="CTF_NFI"/>
    <property type="match status" value="1"/>
</dbReference>
<dbReference type="Pfam" id="PF03165">
    <property type="entry name" value="MH1"/>
    <property type="match status" value="1"/>
</dbReference>
<dbReference type="Pfam" id="PF10524">
    <property type="entry name" value="NfI_DNAbd_pre-N"/>
    <property type="match status" value="1"/>
</dbReference>
<dbReference type="SMART" id="SM00523">
    <property type="entry name" value="DWA"/>
    <property type="match status" value="1"/>
</dbReference>
<dbReference type="PROSITE" id="PS00349">
    <property type="entry name" value="CTF_NFI_1"/>
    <property type="match status" value="1"/>
</dbReference>
<dbReference type="PROSITE" id="PS51080">
    <property type="entry name" value="CTF_NFI_2"/>
    <property type="match status" value="1"/>
</dbReference>
<evidence type="ECO:0000250" key="1">
    <source>
        <dbReference type="UniProtKB" id="P97863"/>
    </source>
</evidence>
<evidence type="ECO:0000255" key="2">
    <source>
        <dbReference type="PROSITE-ProRule" id="PRU00436"/>
    </source>
</evidence>
<evidence type="ECO:0000256" key="3">
    <source>
        <dbReference type="SAM" id="MobiDB-lite"/>
    </source>
</evidence>
<evidence type="ECO:0000269" key="4">
    <source>
    </source>
</evidence>
<evidence type="ECO:0000269" key="5">
    <source>
    </source>
</evidence>
<evidence type="ECO:0000303" key="6">
    <source>
    </source>
</evidence>
<evidence type="ECO:0000303" key="7">
    <source>
    </source>
</evidence>
<evidence type="ECO:0000303" key="8">
    <source>
    </source>
</evidence>
<evidence type="ECO:0000305" key="9"/>
<evidence type="ECO:0007744" key="10">
    <source>
    </source>
</evidence>
<evidence type="ECO:0007744" key="11">
    <source>
    </source>
</evidence>
<evidence type="ECO:0007744" key="12">
    <source>
    </source>
</evidence>
<evidence type="ECO:0007744" key="13">
    <source>
    </source>
</evidence>
<gene>
    <name type="primary">NFIB</name>
</gene>